<accession>Q1R6R1</accession>
<reference key="1">
    <citation type="journal article" date="2006" name="Proc. Natl. Acad. Sci. U.S.A.">
        <title>Identification of genes subject to positive selection in uropathogenic strains of Escherichia coli: a comparative genomics approach.</title>
        <authorList>
            <person name="Chen S.L."/>
            <person name="Hung C.-S."/>
            <person name="Xu J."/>
            <person name="Reigstad C.S."/>
            <person name="Magrini V."/>
            <person name="Sabo A."/>
            <person name="Blasiar D."/>
            <person name="Bieri T."/>
            <person name="Meyer R.R."/>
            <person name="Ozersky P."/>
            <person name="Armstrong J.R."/>
            <person name="Fulton R.S."/>
            <person name="Latreille J.P."/>
            <person name="Spieth J."/>
            <person name="Hooton T.M."/>
            <person name="Mardis E.R."/>
            <person name="Hultgren S.J."/>
            <person name="Gordon J.I."/>
        </authorList>
    </citation>
    <scope>NUCLEOTIDE SEQUENCE [LARGE SCALE GENOMIC DNA]</scope>
    <source>
        <strain>UTI89 / UPEC</strain>
    </source>
</reference>
<keyword id="KW-0963">Cytoplasm</keyword>
<keyword id="KW-0227">DNA damage</keyword>
<keyword id="KW-0228">DNA excision</keyword>
<keyword id="KW-0234">DNA repair</keyword>
<keyword id="KW-0238">DNA-binding</keyword>
<keyword id="KW-0378">Hydrolase</keyword>
<evidence type="ECO:0000255" key="1">
    <source>
        <dbReference type="HAMAP-Rule" id="MF_01956"/>
    </source>
</evidence>
<name>MUG_ECOUT</name>
<organism>
    <name type="scientific">Escherichia coli (strain UTI89 / UPEC)</name>
    <dbReference type="NCBI Taxonomy" id="364106"/>
    <lineage>
        <taxon>Bacteria</taxon>
        <taxon>Pseudomonadati</taxon>
        <taxon>Pseudomonadota</taxon>
        <taxon>Gammaproteobacteria</taxon>
        <taxon>Enterobacterales</taxon>
        <taxon>Enterobacteriaceae</taxon>
        <taxon>Escherichia</taxon>
    </lineage>
</organism>
<comment type="function">
    <text evidence="1">Excises ethenocytosine and uracil, which can arise by alkylation or deamination of cytosine, respectively, from the corresponding mispairs with guanine in ds-DNA. It is capable of hydrolyzing the carbon-nitrogen bond between the sugar-phosphate backbone of the DNA and the mispaired base. The complementary strand guanine functions in substrate recognition. Required for DNA damage lesion repair in stationary-phase cells.</text>
</comment>
<comment type="catalytic activity">
    <reaction evidence="1">
        <text>Specifically hydrolyzes mismatched double-stranded DNA and polynucleotides, releasing free uracil.</text>
        <dbReference type="EC" id="3.2.2.28"/>
    </reaction>
</comment>
<comment type="subunit">
    <text evidence="1">Binds DNA as a monomer.</text>
</comment>
<comment type="subcellular location">
    <subcellularLocation>
        <location evidence="1">Cytoplasm</location>
    </subcellularLocation>
</comment>
<comment type="similarity">
    <text evidence="1">Belongs to the uracil-DNA glycosylase (UDG) superfamily. TDG/mug family.</text>
</comment>
<feature type="chain" id="PRO_1000070791" description="G/U mismatch-specific DNA glycosylase">
    <location>
        <begin position="1"/>
        <end position="168"/>
    </location>
</feature>
<proteinExistence type="inferred from homology"/>
<protein>
    <recommendedName>
        <fullName evidence="1">G/U mismatch-specific DNA glycosylase</fullName>
        <ecNumber evidence="1">3.2.2.28</ecNumber>
    </recommendedName>
    <alternativeName>
        <fullName evidence="1">Double-strand-specific uracil glycosylase</fullName>
    </alternativeName>
    <alternativeName>
        <fullName evidence="1">Mismatch-specific uracil DNA-glycosylase</fullName>
        <shortName evidence="1">MUG</shortName>
    </alternativeName>
</protein>
<gene>
    <name evidence="1" type="primary">mug</name>
    <name type="ordered locus">UTI89_C3506</name>
</gene>
<sequence length="168" mass="18673">MVEDILAPGLRVVFCGINPGLSSAGTGFPFAHPANRFWKVIYQAGFTDRQLKPQEAQHLLDYRCGVTKLVDRPTVQANEVSKQELHAGGRKLIEKIEDYQPQALAILGKQAYEQGFSQRGAQWGKQTLTIGSTQIWVLPNPSGLSRVSLEKLVEAYRELDQALVVRGR</sequence>
<dbReference type="EC" id="3.2.2.28" evidence="1"/>
<dbReference type="EMBL" id="CP000243">
    <property type="protein sequence ID" value="ABE08953.1"/>
    <property type="molecule type" value="Genomic_DNA"/>
</dbReference>
<dbReference type="RefSeq" id="WP_000228937.1">
    <property type="nucleotide sequence ID" value="NZ_CP064825.1"/>
</dbReference>
<dbReference type="SMR" id="Q1R6R1"/>
<dbReference type="GeneID" id="93778924"/>
<dbReference type="KEGG" id="eci:UTI89_C3506"/>
<dbReference type="HOGENOM" id="CLU_042829_3_1_6"/>
<dbReference type="Proteomes" id="UP000001952">
    <property type="component" value="Chromosome"/>
</dbReference>
<dbReference type="GO" id="GO:0005737">
    <property type="term" value="C:cytoplasm"/>
    <property type="evidence" value="ECO:0007669"/>
    <property type="project" value="UniProtKB-SubCell"/>
</dbReference>
<dbReference type="GO" id="GO:0003677">
    <property type="term" value="F:DNA binding"/>
    <property type="evidence" value="ECO:0007669"/>
    <property type="project" value="UniProtKB-KW"/>
</dbReference>
<dbReference type="GO" id="GO:0008263">
    <property type="term" value="F:pyrimidine-specific mismatch base pair DNA N-glycosylase activity"/>
    <property type="evidence" value="ECO:0007669"/>
    <property type="project" value="UniProtKB-UniRule"/>
</dbReference>
<dbReference type="GO" id="GO:0004844">
    <property type="term" value="F:uracil DNA N-glycosylase activity"/>
    <property type="evidence" value="ECO:0007669"/>
    <property type="project" value="TreeGrafter"/>
</dbReference>
<dbReference type="GO" id="GO:0006285">
    <property type="term" value="P:base-excision repair, AP site formation"/>
    <property type="evidence" value="ECO:0007669"/>
    <property type="project" value="UniProtKB-UniRule"/>
</dbReference>
<dbReference type="CDD" id="cd10028">
    <property type="entry name" value="UDG-F2_TDG_MUG"/>
    <property type="match status" value="1"/>
</dbReference>
<dbReference type="FunFam" id="3.40.470.10:FF:000003">
    <property type="entry name" value="G/U mismatch-specific DNA glycosylase"/>
    <property type="match status" value="1"/>
</dbReference>
<dbReference type="Gene3D" id="3.40.470.10">
    <property type="entry name" value="Uracil-DNA glycosylase-like domain"/>
    <property type="match status" value="1"/>
</dbReference>
<dbReference type="HAMAP" id="MF_01956">
    <property type="entry name" value="MUG"/>
    <property type="match status" value="1"/>
</dbReference>
<dbReference type="InterPro" id="IPR015637">
    <property type="entry name" value="MUG/TDG"/>
</dbReference>
<dbReference type="InterPro" id="IPR023502">
    <property type="entry name" value="MUG_bact"/>
</dbReference>
<dbReference type="InterPro" id="IPR005122">
    <property type="entry name" value="Uracil-DNA_glycosylase-like"/>
</dbReference>
<dbReference type="InterPro" id="IPR036895">
    <property type="entry name" value="Uracil-DNA_glycosylase-like_sf"/>
</dbReference>
<dbReference type="NCBIfam" id="NF007570">
    <property type="entry name" value="PRK10201.1"/>
    <property type="match status" value="1"/>
</dbReference>
<dbReference type="PANTHER" id="PTHR12159">
    <property type="entry name" value="G/T AND G/U MISMATCH-SPECIFIC DNA GLYCOSYLASE"/>
    <property type="match status" value="1"/>
</dbReference>
<dbReference type="PANTHER" id="PTHR12159:SF9">
    <property type="entry name" value="G_T MISMATCH-SPECIFIC THYMINE DNA GLYCOSYLASE"/>
    <property type="match status" value="1"/>
</dbReference>
<dbReference type="Pfam" id="PF03167">
    <property type="entry name" value="UDG"/>
    <property type="match status" value="1"/>
</dbReference>
<dbReference type="SUPFAM" id="SSF52141">
    <property type="entry name" value="Uracil-DNA glycosylase-like"/>
    <property type="match status" value="1"/>
</dbReference>